<reference key="1">
    <citation type="journal article" date="2005" name="Nucleic Acids Res.">
        <title>Genome dynamics and diversity of Shigella species, the etiologic agents of bacillary dysentery.</title>
        <authorList>
            <person name="Yang F."/>
            <person name="Yang J."/>
            <person name="Zhang X."/>
            <person name="Chen L."/>
            <person name="Jiang Y."/>
            <person name="Yan Y."/>
            <person name="Tang X."/>
            <person name="Wang J."/>
            <person name="Xiong Z."/>
            <person name="Dong J."/>
            <person name="Xue Y."/>
            <person name="Zhu Y."/>
            <person name="Xu X."/>
            <person name="Sun L."/>
            <person name="Chen S."/>
            <person name="Nie H."/>
            <person name="Peng J."/>
            <person name="Xu J."/>
            <person name="Wang Y."/>
            <person name="Yuan Z."/>
            <person name="Wen Y."/>
            <person name="Yao Z."/>
            <person name="Shen Y."/>
            <person name="Qiang B."/>
            <person name="Hou Y."/>
            <person name="Yu J."/>
            <person name="Jin Q."/>
        </authorList>
    </citation>
    <scope>NUCLEOTIDE SEQUENCE [LARGE SCALE GENOMIC DNA]</scope>
    <source>
        <strain>Sd197</strain>
    </source>
</reference>
<keyword id="KW-0997">Cell inner membrane</keyword>
<keyword id="KW-1003">Cell membrane</keyword>
<keyword id="KW-0472">Membrane</keyword>
<keyword id="KW-1185">Reference proteome</keyword>
<keyword id="KW-0812">Transmembrane</keyword>
<keyword id="KW-1133">Transmembrane helix</keyword>
<sequence>MRIAKIGVIALFLFMALGGIGGVMLAGYTFILRAG</sequence>
<protein>
    <recommendedName>
        <fullName evidence="1">UPF0387 membrane protein YohO</fullName>
    </recommendedName>
</protein>
<organism>
    <name type="scientific">Shigella dysenteriae serotype 1 (strain Sd197)</name>
    <dbReference type="NCBI Taxonomy" id="300267"/>
    <lineage>
        <taxon>Bacteria</taxon>
        <taxon>Pseudomonadati</taxon>
        <taxon>Pseudomonadota</taxon>
        <taxon>Gammaproteobacteria</taxon>
        <taxon>Enterobacterales</taxon>
        <taxon>Enterobacteriaceae</taxon>
        <taxon>Shigella</taxon>
    </lineage>
</organism>
<gene>
    <name evidence="1" type="primary">yohO</name>
    <name type="ordered locus">SDY_2161</name>
</gene>
<accession>Q32EK8</accession>
<dbReference type="EMBL" id="CP000034">
    <property type="protein sequence ID" value="ABB62247.1"/>
    <property type="molecule type" value="Genomic_DNA"/>
</dbReference>
<dbReference type="RefSeq" id="WP_001216963.1">
    <property type="nucleotide sequence ID" value="NC_007606.1"/>
</dbReference>
<dbReference type="RefSeq" id="YP_403738.1">
    <property type="nucleotide sequence ID" value="NC_007606.1"/>
</dbReference>
<dbReference type="STRING" id="300267.SDY_2161"/>
<dbReference type="EnsemblBacteria" id="ABB62247">
    <property type="protein sequence ID" value="ABB62247"/>
    <property type="gene ID" value="SDY_2161"/>
</dbReference>
<dbReference type="KEGG" id="sdy:SDY_2161"/>
<dbReference type="PATRIC" id="fig|300267.13.peg.2613"/>
<dbReference type="HOGENOM" id="CLU_220259_0_0_6"/>
<dbReference type="Proteomes" id="UP000002716">
    <property type="component" value="Chromosome"/>
</dbReference>
<dbReference type="GO" id="GO:0005886">
    <property type="term" value="C:plasma membrane"/>
    <property type="evidence" value="ECO:0007669"/>
    <property type="project" value="UniProtKB-SubCell"/>
</dbReference>
<dbReference type="HAMAP" id="MF_01362">
    <property type="entry name" value="UPF0387"/>
    <property type="match status" value="1"/>
</dbReference>
<dbReference type="InterPro" id="IPR020870">
    <property type="entry name" value="UPF0387_membrane"/>
</dbReference>
<dbReference type="NCBIfam" id="NF010225">
    <property type="entry name" value="PRK13681.1"/>
    <property type="match status" value="1"/>
</dbReference>
<comment type="subcellular location">
    <subcellularLocation>
        <location evidence="1">Cell inner membrane</location>
        <topology evidence="1">Single-pass membrane protein</topology>
    </subcellularLocation>
</comment>
<comment type="similarity">
    <text evidence="1">Belongs to the UPF0387 family.</text>
</comment>
<evidence type="ECO:0000255" key="1">
    <source>
        <dbReference type="HAMAP-Rule" id="MF_01362"/>
    </source>
</evidence>
<feature type="chain" id="PRO_0000252202" description="UPF0387 membrane protein YohO">
    <location>
        <begin position="1"/>
        <end position="35"/>
    </location>
</feature>
<feature type="transmembrane region" description="Helical" evidence="1">
    <location>
        <begin position="6"/>
        <end position="26"/>
    </location>
</feature>
<proteinExistence type="inferred from homology"/>
<name>YOHO_SHIDS</name>